<keyword id="KW-0963">Cytoplasm</keyword>
<keyword id="KW-0597">Phosphoprotein</keyword>
<keyword id="KW-1185">Reference proteome</keyword>
<protein>
    <recommendedName>
        <fullName evidence="1">Citrate lyase acyl carrier protein</fullName>
    </recommendedName>
    <alternativeName>
        <fullName evidence="1">Citrate lyase gamma chain</fullName>
    </alternativeName>
</protein>
<reference key="1">
    <citation type="journal article" date="2000" name="Nature">
        <title>DNA sequence of both chromosomes of the cholera pathogen Vibrio cholerae.</title>
        <authorList>
            <person name="Heidelberg J.F."/>
            <person name="Eisen J.A."/>
            <person name="Nelson W.C."/>
            <person name="Clayton R.A."/>
            <person name="Gwinn M.L."/>
            <person name="Dodson R.J."/>
            <person name="Haft D.H."/>
            <person name="Hickey E.K."/>
            <person name="Peterson J.D."/>
            <person name="Umayam L.A."/>
            <person name="Gill S.R."/>
            <person name="Nelson K.E."/>
            <person name="Read T.D."/>
            <person name="Tettelin H."/>
            <person name="Richardson D.L."/>
            <person name="Ermolaeva M.D."/>
            <person name="Vamathevan J.J."/>
            <person name="Bass S."/>
            <person name="Qin H."/>
            <person name="Dragoi I."/>
            <person name="Sellers P."/>
            <person name="McDonald L.A."/>
            <person name="Utterback T.R."/>
            <person name="Fleischmann R.D."/>
            <person name="Nierman W.C."/>
            <person name="White O."/>
            <person name="Salzberg S.L."/>
            <person name="Smith H.O."/>
            <person name="Colwell R.R."/>
            <person name="Mekalanos J.J."/>
            <person name="Venter J.C."/>
            <person name="Fraser C.M."/>
        </authorList>
    </citation>
    <scope>NUCLEOTIDE SEQUENCE [LARGE SCALE GENOMIC DNA]</scope>
    <source>
        <strain>ATCC 39315 / El Tor Inaba N16961</strain>
    </source>
</reference>
<dbReference type="EMBL" id="AE003852">
    <property type="protein sequence ID" value="AAF93961.1"/>
    <property type="molecule type" value="Genomic_DNA"/>
</dbReference>
<dbReference type="PIR" id="G82277">
    <property type="entry name" value="G82277"/>
</dbReference>
<dbReference type="RefSeq" id="NP_230446.1">
    <property type="nucleotide sequence ID" value="NC_002505.1"/>
</dbReference>
<dbReference type="RefSeq" id="WP_000684015.1">
    <property type="nucleotide sequence ID" value="NZ_LT906614.1"/>
</dbReference>
<dbReference type="SMR" id="Q9KTU1"/>
<dbReference type="STRING" id="243277.VC_0797"/>
<dbReference type="DNASU" id="2615340"/>
<dbReference type="EnsemblBacteria" id="AAF93961">
    <property type="protein sequence ID" value="AAF93961"/>
    <property type="gene ID" value="VC_0797"/>
</dbReference>
<dbReference type="GeneID" id="69720455"/>
<dbReference type="KEGG" id="vch:VC_0797"/>
<dbReference type="PATRIC" id="fig|243277.26.peg.760"/>
<dbReference type="eggNOG" id="COG3052">
    <property type="taxonomic scope" value="Bacteria"/>
</dbReference>
<dbReference type="HOGENOM" id="CLU_158489_0_0_6"/>
<dbReference type="Proteomes" id="UP000000584">
    <property type="component" value="Chromosome 1"/>
</dbReference>
<dbReference type="GO" id="GO:0005737">
    <property type="term" value="C:cytoplasm"/>
    <property type="evidence" value="ECO:0007669"/>
    <property type="project" value="UniProtKB-SubCell"/>
</dbReference>
<dbReference type="HAMAP" id="MF_00805">
    <property type="entry name" value="CitD"/>
    <property type="match status" value="1"/>
</dbReference>
<dbReference type="InterPro" id="IPR006495">
    <property type="entry name" value="CitD"/>
</dbReference>
<dbReference type="InterPro" id="IPR023439">
    <property type="entry name" value="Mal_deCO2ase/Cit_lyase_ACP"/>
</dbReference>
<dbReference type="NCBIfam" id="TIGR01608">
    <property type="entry name" value="citD"/>
    <property type="match status" value="1"/>
</dbReference>
<dbReference type="NCBIfam" id="NF009726">
    <property type="entry name" value="PRK13253.1"/>
    <property type="match status" value="1"/>
</dbReference>
<dbReference type="Pfam" id="PF06857">
    <property type="entry name" value="ACP"/>
    <property type="match status" value="1"/>
</dbReference>
<dbReference type="PIRSF" id="PIRSF002736">
    <property type="entry name" value="Citrt_lyas_gamma"/>
    <property type="match status" value="1"/>
</dbReference>
<accession>Q9KTU1</accession>
<organism>
    <name type="scientific">Vibrio cholerae serotype O1 (strain ATCC 39315 / El Tor Inaba N16961)</name>
    <dbReference type="NCBI Taxonomy" id="243277"/>
    <lineage>
        <taxon>Bacteria</taxon>
        <taxon>Pseudomonadati</taxon>
        <taxon>Pseudomonadota</taxon>
        <taxon>Gammaproteobacteria</taxon>
        <taxon>Vibrionales</taxon>
        <taxon>Vibrionaceae</taxon>
        <taxon>Vibrio</taxon>
    </lineage>
</organism>
<feature type="chain" id="PRO_0000214718" description="Citrate lyase acyl carrier protein">
    <location>
        <begin position="1"/>
        <end position="98"/>
    </location>
</feature>
<feature type="modified residue" description="O-(phosphoribosyl dephospho-coenzyme A)serine" evidence="1">
    <location>
        <position position="14"/>
    </location>
</feature>
<comment type="function">
    <text evidence="1">Covalent carrier of the coenzyme of citrate lyase.</text>
</comment>
<comment type="subunit">
    <text evidence="1">Oligomer with a subunit composition of (alpha,beta,gamma)6.</text>
</comment>
<comment type="subcellular location">
    <subcellularLocation>
        <location evidence="1">Cytoplasm</location>
    </subcellularLocation>
</comment>
<comment type="similarity">
    <text evidence="1">Belongs to the CitD family.</text>
</comment>
<name>CITD_VIBCH</name>
<gene>
    <name evidence="1" type="primary">citD</name>
    <name type="ordered locus">VC_0797</name>
</gene>
<evidence type="ECO:0000255" key="1">
    <source>
        <dbReference type="HAMAP-Rule" id="MF_00805"/>
    </source>
</evidence>
<sequence>MKIAHPAFAGTLESSDLQVRIEPNNDGGIELVLDSTVEQQFGHAIRQVVLHTLDAMQVRDALVTIEDKGALDCVIRARVQAAVMRACDVQNIEWSQLS</sequence>
<proteinExistence type="inferred from homology"/>